<accession>B2SUY3</accession>
<feature type="chain" id="PRO_0000383454" description="L-lactate dehydrogenase">
    <location>
        <begin position="1"/>
        <end position="388"/>
    </location>
</feature>
<feature type="domain" description="FMN hydroxy acid dehydrogenase" evidence="1">
    <location>
        <begin position="1"/>
        <end position="380"/>
    </location>
</feature>
<feature type="active site" description="Proton acceptor" evidence="1">
    <location>
        <position position="275"/>
    </location>
</feature>
<feature type="binding site" evidence="1">
    <location>
        <position position="24"/>
    </location>
    <ligand>
        <name>substrate</name>
    </ligand>
</feature>
<feature type="binding site" evidence="1">
    <location>
        <position position="106"/>
    </location>
    <ligand>
        <name>FMN</name>
        <dbReference type="ChEBI" id="CHEBI:58210"/>
    </ligand>
</feature>
<feature type="binding site" evidence="1">
    <location>
        <position position="127"/>
    </location>
    <ligand>
        <name>FMN</name>
        <dbReference type="ChEBI" id="CHEBI:58210"/>
    </ligand>
</feature>
<feature type="binding site" evidence="1">
    <location>
        <position position="129"/>
    </location>
    <ligand>
        <name>substrate</name>
    </ligand>
</feature>
<feature type="binding site" evidence="1">
    <location>
        <position position="155"/>
    </location>
    <ligand>
        <name>FMN</name>
        <dbReference type="ChEBI" id="CHEBI:58210"/>
    </ligand>
</feature>
<feature type="binding site" evidence="1">
    <location>
        <position position="164"/>
    </location>
    <ligand>
        <name>substrate</name>
    </ligand>
</feature>
<feature type="binding site" evidence="1">
    <location>
        <position position="251"/>
    </location>
    <ligand>
        <name>FMN</name>
        <dbReference type="ChEBI" id="CHEBI:58210"/>
    </ligand>
</feature>
<feature type="binding site" evidence="1">
    <location>
        <position position="278"/>
    </location>
    <ligand>
        <name>substrate</name>
    </ligand>
</feature>
<feature type="binding site" evidence="1">
    <location>
        <begin position="306"/>
        <end position="330"/>
    </location>
    <ligand>
        <name>FMN</name>
        <dbReference type="ChEBI" id="CHEBI:58210"/>
    </ligand>
</feature>
<keyword id="KW-0997">Cell inner membrane</keyword>
<keyword id="KW-1003">Cell membrane</keyword>
<keyword id="KW-0285">Flavoprotein</keyword>
<keyword id="KW-0288">FMN</keyword>
<keyword id="KW-0472">Membrane</keyword>
<keyword id="KW-0560">Oxidoreductase</keyword>
<reference key="1">
    <citation type="journal article" date="2008" name="BMC Genomics">
        <title>Genome sequence and rapid evolution of the rice pathogen Xanthomonas oryzae pv. oryzae PXO99A.</title>
        <authorList>
            <person name="Salzberg S.L."/>
            <person name="Sommer D.D."/>
            <person name="Schatz M.C."/>
            <person name="Phillippy A.M."/>
            <person name="Rabinowicz P.D."/>
            <person name="Tsuge S."/>
            <person name="Furutani A."/>
            <person name="Ochiai H."/>
            <person name="Delcher A.L."/>
            <person name="Kelley D."/>
            <person name="Madupu R."/>
            <person name="Puiu D."/>
            <person name="Radune D."/>
            <person name="Shumway M."/>
            <person name="Trapnell C."/>
            <person name="Aparna G."/>
            <person name="Jha G."/>
            <person name="Pandey A."/>
            <person name="Patil P.B."/>
            <person name="Ishihara H."/>
            <person name="Meyer D.F."/>
            <person name="Szurek B."/>
            <person name="Verdier V."/>
            <person name="Koebnik R."/>
            <person name="Dow J.M."/>
            <person name="Ryan R.P."/>
            <person name="Hirata H."/>
            <person name="Tsuyumu S."/>
            <person name="Won Lee S."/>
            <person name="Seo Y.-S."/>
            <person name="Sriariyanum M."/>
            <person name="Ronald P.C."/>
            <person name="Sonti R.V."/>
            <person name="Van Sluys M.-A."/>
            <person name="Leach J.E."/>
            <person name="White F.F."/>
            <person name="Bogdanove A.J."/>
        </authorList>
    </citation>
    <scope>NUCLEOTIDE SEQUENCE [LARGE SCALE GENOMIC DNA]</scope>
    <source>
        <strain>PXO99A</strain>
    </source>
</reference>
<organism>
    <name type="scientific">Xanthomonas oryzae pv. oryzae (strain PXO99A)</name>
    <dbReference type="NCBI Taxonomy" id="360094"/>
    <lineage>
        <taxon>Bacteria</taxon>
        <taxon>Pseudomonadati</taxon>
        <taxon>Pseudomonadota</taxon>
        <taxon>Gammaproteobacteria</taxon>
        <taxon>Lysobacterales</taxon>
        <taxon>Lysobacteraceae</taxon>
        <taxon>Xanthomonas</taxon>
    </lineage>
</organism>
<comment type="function">
    <text evidence="1">Catalyzes the conversion of L-lactate to pyruvate. Is coupled to the respiratory chain.</text>
</comment>
<comment type="catalytic activity">
    <reaction evidence="1">
        <text>(S)-lactate + A = pyruvate + AH2</text>
        <dbReference type="Rhea" id="RHEA:45816"/>
        <dbReference type="ChEBI" id="CHEBI:13193"/>
        <dbReference type="ChEBI" id="CHEBI:15361"/>
        <dbReference type="ChEBI" id="CHEBI:16651"/>
        <dbReference type="ChEBI" id="CHEBI:17499"/>
    </reaction>
</comment>
<comment type="cofactor">
    <cofactor evidence="1">
        <name>FMN</name>
        <dbReference type="ChEBI" id="CHEBI:58210"/>
    </cofactor>
</comment>
<comment type="subcellular location">
    <subcellularLocation>
        <location evidence="1">Cell inner membrane</location>
        <topology evidence="1">Peripheral membrane protein</topology>
    </subcellularLocation>
</comment>
<comment type="similarity">
    <text evidence="1">Belongs to the FMN-dependent alpha-hydroxy acid dehydrogenase family.</text>
</comment>
<name>LLDD_XANOP</name>
<gene>
    <name evidence="1" type="primary">lldD</name>
    <name type="ordered locus">PXO_03463</name>
</gene>
<protein>
    <recommendedName>
        <fullName evidence="1">L-lactate dehydrogenase</fullName>
        <ecNumber evidence="1">1.1.-.-</ecNumber>
    </recommendedName>
</protein>
<evidence type="ECO:0000255" key="1">
    <source>
        <dbReference type="HAMAP-Rule" id="MF_01559"/>
    </source>
</evidence>
<sequence length="388" mass="41842">MIISAASDYRAAAQARLPPFLFHYIDGGAYAEHTLRRNVSDLADVALRQRVLRNMSDLRLSTELFGETLAMPVALGPVGLTGMYARRGEVQAARAAAARGIPFTLSTVSVCPIEEVAPAIERPMWFQLYVLKDRGFMRNALERAKAAGVTTLVFTVDMPTPGARYRDAHSGMSGPNASLRRMLQAVTHPRWAWDVGVLGKPHDLGNISAYRGNPTGLQDYIGWLGANFDPSIAWKDLEWIREFWTGPMVIKGILDPEDARDAVRFGADGIVVSNHGGRQLDGVLSSARALPAIADAVKGELKILADSGIRSGLDVVRMLALGADAVLLGRAFVYALAADGQAGVENLLTLIEKEMRVAMTLTGTHSIAQISADALSRVTREQANAVSP</sequence>
<proteinExistence type="inferred from homology"/>
<dbReference type="EC" id="1.1.-.-" evidence="1"/>
<dbReference type="EMBL" id="CP000967">
    <property type="protein sequence ID" value="ACD56688.1"/>
    <property type="molecule type" value="Genomic_DNA"/>
</dbReference>
<dbReference type="RefSeq" id="WP_011257025.1">
    <property type="nucleotide sequence ID" value="NC_010717.2"/>
</dbReference>
<dbReference type="SMR" id="B2SUY3"/>
<dbReference type="KEGG" id="xop:PXO_03463"/>
<dbReference type="eggNOG" id="COG1304">
    <property type="taxonomic scope" value="Bacteria"/>
</dbReference>
<dbReference type="HOGENOM" id="CLU_020639_0_0_6"/>
<dbReference type="Proteomes" id="UP000001740">
    <property type="component" value="Chromosome"/>
</dbReference>
<dbReference type="GO" id="GO:0005886">
    <property type="term" value="C:plasma membrane"/>
    <property type="evidence" value="ECO:0007669"/>
    <property type="project" value="UniProtKB-SubCell"/>
</dbReference>
<dbReference type="GO" id="GO:0010181">
    <property type="term" value="F:FMN binding"/>
    <property type="evidence" value="ECO:0007669"/>
    <property type="project" value="InterPro"/>
</dbReference>
<dbReference type="GO" id="GO:0004459">
    <property type="term" value="F:L-lactate dehydrogenase activity"/>
    <property type="evidence" value="ECO:0007669"/>
    <property type="project" value="UniProtKB-UniRule"/>
</dbReference>
<dbReference type="GO" id="GO:0009060">
    <property type="term" value="P:aerobic respiration"/>
    <property type="evidence" value="ECO:0007669"/>
    <property type="project" value="TreeGrafter"/>
</dbReference>
<dbReference type="GO" id="GO:0006089">
    <property type="term" value="P:lactate metabolic process"/>
    <property type="evidence" value="ECO:0007669"/>
    <property type="project" value="UniProtKB-UniRule"/>
</dbReference>
<dbReference type="CDD" id="cd02809">
    <property type="entry name" value="alpha_hydroxyacid_oxid_FMN"/>
    <property type="match status" value="1"/>
</dbReference>
<dbReference type="FunFam" id="3.20.20.70:FF:000029">
    <property type="entry name" value="L-lactate dehydrogenase"/>
    <property type="match status" value="1"/>
</dbReference>
<dbReference type="Gene3D" id="3.20.20.70">
    <property type="entry name" value="Aldolase class I"/>
    <property type="match status" value="1"/>
</dbReference>
<dbReference type="HAMAP" id="MF_01559">
    <property type="entry name" value="L_lact_dehydr"/>
    <property type="match status" value="1"/>
</dbReference>
<dbReference type="InterPro" id="IPR013785">
    <property type="entry name" value="Aldolase_TIM"/>
</dbReference>
<dbReference type="InterPro" id="IPR012133">
    <property type="entry name" value="Alpha-hydoxy_acid_DH_FMN"/>
</dbReference>
<dbReference type="InterPro" id="IPR000262">
    <property type="entry name" value="FMN-dep_DH"/>
</dbReference>
<dbReference type="InterPro" id="IPR037396">
    <property type="entry name" value="FMN_HAD"/>
</dbReference>
<dbReference type="InterPro" id="IPR008259">
    <property type="entry name" value="FMN_hydac_DH_AS"/>
</dbReference>
<dbReference type="InterPro" id="IPR020920">
    <property type="entry name" value="LldD"/>
</dbReference>
<dbReference type="NCBIfam" id="NF033901">
    <property type="entry name" value="L_lactate_LldD"/>
    <property type="match status" value="1"/>
</dbReference>
<dbReference type="NCBIfam" id="NF008398">
    <property type="entry name" value="PRK11197.1"/>
    <property type="match status" value="1"/>
</dbReference>
<dbReference type="PANTHER" id="PTHR10578:SF85">
    <property type="entry name" value="L-LACTATE DEHYDROGENASE"/>
    <property type="match status" value="1"/>
</dbReference>
<dbReference type="PANTHER" id="PTHR10578">
    <property type="entry name" value="S -2-HYDROXY-ACID OXIDASE-RELATED"/>
    <property type="match status" value="1"/>
</dbReference>
<dbReference type="Pfam" id="PF01070">
    <property type="entry name" value="FMN_dh"/>
    <property type="match status" value="1"/>
</dbReference>
<dbReference type="PIRSF" id="PIRSF000138">
    <property type="entry name" value="Al-hdrx_acd_dh"/>
    <property type="match status" value="1"/>
</dbReference>
<dbReference type="SUPFAM" id="SSF51395">
    <property type="entry name" value="FMN-linked oxidoreductases"/>
    <property type="match status" value="1"/>
</dbReference>
<dbReference type="PROSITE" id="PS00557">
    <property type="entry name" value="FMN_HYDROXY_ACID_DH_1"/>
    <property type="match status" value="1"/>
</dbReference>
<dbReference type="PROSITE" id="PS51349">
    <property type="entry name" value="FMN_HYDROXY_ACID_DH_2"/>
    <property type="match status" value="1"/>
</dbReference>